<name>CTU1_LODEL</name>
<organism>
    <name type="scientific">Lodderomyces elongisporus (strain ATCC 11503 / CBS 2605 / JCM 1781 / NBRC 1676 / NRRL YB-4239)</name>
    <name type="common">Yeast</name>
    <name type="synonym">Saccharomyces elongisporus</name>
    <dbReference type="NCBI Taxonomy" id="379508"/>
    <lineage>
        <taxon>Eukaryota</taxon>
        <taxon>Fungi</taxon>
        <taxon>Dikarya</taxon>
        <taxon>Ascomycota</taxon>
        <taxon>Saccharomycotina</taxon>
        <taxon>Pichiomycetes</taxon>
        <taxon>Debaryomycetaceae</taxon>
        <taxon>Candida/Lodderomyces clade</taxon>
        <taxon>Lodderomyces</taxon>
    </lineage>
</organism>
<reference key="1">
    <citation type="journal article" date="2009" name="Nature">
        <title>Evolution of pathogenicity and sexual reproduction in eight Candida genomes.</title>
        <authorList>
            <person name="Butler G."/>
            <person name="Rasmussen M.D."/>
            <person name="Lin M.F."/>
            <person name="Santos M.A.S."/>
            <person name="Sakthikumar S."/>
            <person name="Munro C.A."/>
            <person name="Rheinbay E."/>
            <person name="Grabherr M."/>
            <person name="Forche A."/>
            <person name="Reedy J.L."/>
            <person name="Agrafioti I."/>
            <person name="Arnaud M.B."/>
            <person name="Bates S."/>
            <person name="Brown A.J.P."/>
            <person name="Brunke S."/>
            <person name="Costanzo M.C."/>
            <person name="Fitzpatrick D.A."/>
            <person name="de Groot P.W.J."/>
            <person name="Harris D."/>
            <person name="Hoyer L.L."/>
            <person name="Hube B."/>
            <person name="Klis F.M."/>
            <person name="Kodira C."/>
            <person name="Lennard N."/>
            <person name="Logue M.E."/>
            <person name="Martin R."/>
            <person name="Neiman A.M."/>
            <person name="Nikolaou E."/>
            <person name="Quail M.A."/>
            <person name="Quinn J."/>
            <person name="Santos M.C."/>
            <person name="Schmitzberger F.F."/>
            <person name="Sherlock G."/>
            <person name="Shah P."/>
            <person name="Silverstein K.A.T."/>
            <person name="Skrzypek M.S."/>
            <person name="Soll D."/>
            <person name="Staggs R."/>
            <person name="Stansfield I."/>
            <person name="Stumpf M.P.H."/>
            <person name="Sudbery P.E."/>
            <person name="Srikantha T."/>
            <person name="Zeng Q."/>
            <person name="Berman J."/>
            <person name="Berriman M."/>
            <person name="Heitman J."/>
            <person name="Gow N.A.R."/>
            <person name="Lorenz M.C."/>
            <person name="Birren B.W."/>
            <person name="Kellis M."/>
            <person name="Cuomo C.A."/>
        </authorList>
    </citation>
    <scope>NUCLEOTIDE SEQUENCE [LARGE SCALE GENOMIC DNA]</scope>
    <source>
        <strain>ATCC 11503 / BCRC 21390 / CBS 2605 / JCM 1781 / NBRC 1676 / NRRL YB-4239</strain>
    </source>
</reference>
<dbReference type="EC" id="2.7.7.-" evidence="1"/>
<dbReference type="EMBL" id="CH981529">
    <property type="protein sequence ID" value="EDK46061.1"/>
    <property type="molecule type" value="Genomic_DNA"/>
</dbReference>
<dbReference type="RefSeq" id="XP_001524270.1">
    <property type="nucleotide sequence ID" value="XM_001524220.1"/>
</dbReference>
<dbReference type="SMR" id="A5E3Q3"/>
<dbReference type="FunCoup" id="A5E3Q3">
    <property type="interactions" value="434"/>
</dbReference>
<dbReference type="STRING" id="379508.A5E3Q3"/>
<dbReference type="GeneID" id="5231602"/>
<dbReference type="KEGG" id="lel:PVL30_003968"/>
<dbReference type="VEuPathDB" id="FungiDB:LELG_04241"/>
<dbReference type="eggNOG" id="KOG2840">
    <property type="taxonomic scope" value="Eukaryota"/>
</dbReference>
<dbReference type="HOGENOM" id="CLU_026481_1_2_1"/>
<dbReference type="InParanoid" id="A5E3Q3"/>
<dbReference type="OMA" id="KPVRGIC"/>
<dbReference type="OrthoDB" id="198857at2759"/>
<dbReference type="UniPathway" id="UPA00988"/>
<dbReference type="Proteomes" id="UP000001996">
    <property type="component" value="Unassembled WGS sequence"/>
</dbReference>
<dbReference type="GO" id="GO:0005829">
    <property type="term" value="C:cytosol"/>
    <property type="evidence" value="ECO:0000250"/>
    <property type="project" value="UniProtKB"/>
</dbReference>
<dbReference type="GO" id="GO:0002144">
    <property type="term" value="C:cytosolic tRNA wobble base thiouridylase complex"/>
    <property type="evidence" value="ECO:0007669"/>
    <property type="project" value="EnsemblFungi"/>
</dbReference>
<dbReference type="GO" id="GO:0005739">
    <property type="term" value="C:mitochondrion"/>
    <property type="evidence" value="ECO:0007669"/>
    <property type="project" value="TreeGrafter"/>
</dbReference>
<dbReference type="GO" id="GO:0016779">
    <property type="term" value="F:nucleotidyltransferase activity"/>
    <property type="evidence" value="ECO:0007669"/>
    <property type="project" value="UniProtKB-UniRule"/>
</dbReference>
<dbReference type="GO" id="GO:0000049">
    <property type="term" value="F:tRNA binding"/>
    <property type="evidence" value="ECO:0000250"/>
    <property type="project" value="UniProtKB"/>
</dbReference>
<dbReference type="GO" id="GO:0103016">
    <property type="term" value="F:tRNA-uridine 2-sulfurtransferase activity"/>
    <property type="evidence" value="ECO:0007669"/>
    <property type="project" value="EnsemblFungi"/>
</dbReference>
<dbReference type="GO" id="GO:0032447">
    <property type="term" value="P:protein urmylation"/>
    <property type="evidence" value="ECO:0007669"/>
    <property type="project" value="UniProtKB-UniRule"/>
</dbReference>
<dbReference type="GO" id="GO:0034227">
    <property type="term" value="P:tRNA thio-modification"/>
    <property type="evidence" value="ECO:0000250"/>
    <property type="project" value="UniProtKB"/>
</dbReference>
<dbReference type="GO" id="GO:0002143">
    <property type="term" value="P:tRNA wobble position uridine thiolation"/>
    <property type="evidence" value="ECO:0007669"/>
    <property type="project" value="EnsemblFungi"/>
</dbReference>
<dbReference type="GO" id="GO:0002098">
    <property type="term" value="P:tRNA wobble uridine modification"/>
    <property type="evidence" value="ECO:0000250"/>
    <property type="project" value="UniProtKB"/>
</dbReference>
<dbReference type="CDD" id="cd01713">
    <property type="entry name" value="CTU1-like"/>
    <property type="match status" value="1"/>
</dbReference>
<dbReference type="FunFam" id="3.40.50.620:FF:000132">
    <property type="entry name" value="Cytoplasmic tRNA 2-thiolation protein 1"/>
    <property type="match status" value="1"/>
</dbReference>
<dbReference type="Gene3D" id="3.40.50.620">
    <property type="entry name" value="HUPs"/>
    <property type="match status" value="1"/>
</dbReference>
<dbReference type="HAMAP" id="MF_03053">
    <property type="entry name" value="CTU1"/>
    <property type="match status" value="1"/>
</dbReference>
<dbReference type="InterPro" id="IPR056369">
    <property type="entry name" value="CTU1-like_ATP-bd"/>
</dbReference>
<dbReference type="InterPro" id="IPR032442">
    <property type="entry name" value="CTU1_C"/>
</dbReference>
<dbReference type="InterPro" id="IPR000541">
    <property type="entry name" value="Ncs6/Tuc1/Ctu1"/>
</dbReference>
<dbReference type="InterPro" id="IPR014729">
    <property type="entry name" value="Rossmann-like_a/b/a_fold"/>
</dbReference>
<dbReference type="InterPro" id="IPR011063">
    <property type="entry name" value="TilS/TtcA_N"/>
</dbReference>
<dbReference type="InterPro" id="IPR035107">
    <property type="entry name" value="tRNA_thiolation_TtcA_Ctu1"/>
</dbReference>
<dbReference type="PANTHER" id="PTHR11807">
    <property type="entry name" value="ATPASES OF THE PP SUPERFAMILY-RELATED"/>
    <property type="match status" value="1"/>
</dbReference>
<dbReference type="PANTHER" id="PTHR11807:SF12">
    <property type="entry name" value="CYTOPLASMIC TRNA 2-THIOLATION PROTEIN 1"/>
    <property type="match status" value="1"/>
</dbReference>
<dbReference type="Pfam" id="PF01171">
    <property type="entry name" value="ATP_bind_3"/>
    <property type="match status" value="1"/>
</dbReference>
<dbReference type="Pfam" id="PF16503">
    <property type="entry name" value="zn-ribbon_14"/>
    <property type="match status" value="1"/>
</dbReference>
<dbReference type="PIRSF" id="PIRSF004976">
    <property type="entry name" value="ATPase_YdaO"/>
    <property type="match status" value="1"/>
</dbReference>
<dbReference type="SUPFAM" id="SSF52402">
    <property type="entry name" value="Adenine nucleotide alpha hydrolases-like"/>
    <property type="match status" value="1"/>
</dbReference>
<protein>
    <recommendedName>
        <fullName evidence="1">Cytoplasmic tRNA 2-thiolation protein 1</fullName>
        <ecNumber evidence="1">2.7.7.-</ecNumber>
    </recommendedName>
    <alternativeName>
        <fullName evidence="1">Cytoplasmic tRNA adenylyltransferase 1</fullName>
    </alternativeName>
</protein>
<gene>
    <name evidence="1" type="primary">NCS6</name>
    <name evidence="1" type="synonym">CTU1</name>
    <name type="ORF">LELG_04241</name>
</gene>
<comment type="function">
    <text evidence="1">Plays a central role in 2-thiolation of mcm(5)S(2)U at tRNA wobble positions of tRNA(Lys), tRNA(Glu) and tRNA(Gln). Directly binds tRNAs and probably acts by catalyzing adenylation of tRNAs, an intermediate required for 2-thiolation. It is unclear whether it acts as a sulfurtransferase that transfers sulfur from thiocarboxylated URM1 onto the uridine of tRNAs at wobble position. Prior mcm(5) tRNA modification by the elongator complex is required for 2-thiolation. May also be involved in protein urmylation.</text>
</comment>
<comment type="pathway">
    <text evidence="1">tRNA modification; 5-methoxycarbonylmethyl-2-thiouridine-tRNA biosynthesis.</text>
</comment>
<comment type="subcellular location">
    <subcellularLocation>
        <location evidence="1">Cytoplasm</location>
    </subcellularLocation>
</comment>
<comment type="similarity">
    <text evidence="1">Belongs to the TtcA family. CTU1/NCS6/ATPBD3 subfamily.</text>
</comment>
<evidence type="ECO:0000255" key="1">
    <source>
        <dbReference type="HAMAP-Rule" id="MF_03053"/>
    </source>
</evidence>
<proteinExistence type="inferred from homology"/>
<feature type="chain" id="PRO_0000368264" description="Cytoplasmic tRNA 2-thiolation protein 1">
    <location>
        <begin position="1"/>
        <end position="379"/>
    </location>
</feature>
<accession>A5E3Q3</accession>
<sequence length="379" mass="42563">MVESSNTKKVKVSSLCELCHGRKAVMKRPKNLRKLCKECFFHVFETEVHNTIVENKLFANVENSEFPERRAVAIGASGGKDSTVLASVMKTLNERYNYGLKLVLLCIDEGIKGYRDHSLETVKMNQKEYDMPLEILSYKDLYDWTMDEVVSCAGIRSSCTYCGVLRRQALDKGAEKLGINHIVTGHNADDMAETVLLNLLRGDINRIENSTKIITDSENSVIQRSKPFAYMSQKEIVLYAHYKNLTYFSTECTYSEEAFRGECRSLFHSLSAVLPSVHTNTIYSGQQFKRKAKAMKRQNNKNNKNNKNNMADEHEVLPNGTVAIKESKRCKKCGSLASNDLCQACFLLAGLEVSRAKVSIDSEGDGAAKLSKTLEGLTF</sequence>
<keyword id="KW-0963">Cytoplasm</keyword>
<keyword id="KW-1185">Reference proteome</keyword>
<keyword id="KW-0694">RNA-binding</keyword>
<keyword id="KW-0808">Transferase</keyword>
<keyword id="KW-0819">tRNA processing</keyword>
<keyword id="KW-0820">tRNA-binding</keyword>